<comment type="function">
    <text evidence="1">Catalyzes the conversion of 4-hydroxy-tetrahydrodipicolinate (HTPA) to tetrahydrodipicolinate.</text>
</comment>
<comment type="catalytic activity">
    <reaction evidence="1">
        <text>(S)-2,3,4,5-tetrahydrodipicolinate + NAD(+) + H2O = (2S,4S)-4-hydroxy-2,3,4,5-tetrahydrodipicolinate + NADH + H(+)</text>
        <dbReference type="Rhea" id="RHEA:35323"/>
        <dbReference type="ChEBI" id="CHEBI:15377"/>
        <dbReference type="ChEBI" id="CHEBI:15378"/>
        <dbReference type="ChEBI" id="CHEBI:16845"/>
        <dbReference type="ChEBI" id="CHEBI:57540"/>
        <dbReference type="ChEBI" id="CHEBI:57945"/>
        <dbReference type="ChEBI" id="CHEBI:67139"/>
        <dbReference type="EC" id="1.17.1.8"/>
    </reaction>
</comment>
<comment type="catalytic activity">
    <reaction evidence="1">
        <text>(S)-2,3,4,5-tetrahydrodipicolinate + NADP(+) + H2O = (2S,4S)-4-hydroxy-2,3,4,5-tetrahydrodipicolinate + NADPH + H(+)</text>
        <dbReference type="Rhea" id="RHEA:35331"/>
        <dbReference type="ChEBI" id="CHEBI:15377"/>
        <dbReference type="ChEBI" id="CHEBI:15378"/>
        <dbReference type="ChEBI" id="CHEBI:16845"/>
        <dbReference type="ChEBI" id="CHEBI:57783"/>
        <dbReference type="ChEBI" id="CHEBI:58349"/>
        <dbReference type="ChEBI" id="CHEBI:67139"/>
        <dbReference type="EC" id="1.17.1.8"/>
    </reaction>
</comment>
<comment type="pathway">
    <text evidence="1">Amino-acid biosynthesis; L-lysine biosynthesis via DAP pathway; (S)-tetrahydrodipicolinate from L-aspartate: step 4/4.</text>
</comment>
<comment type="subcellular location">
    <subcellularLocation>
        <location evidence="1">Cytoplasm</location>
    </subcellularLocation>
</comment>
<comment type="similarity">
    <text evidence="1">Belongs to the DapB family.</text>
</comment>
<comment type="caution">
    <text evidence="2">Was originally thought to be a dihydrodipicolinate reductase (DHDPR), catalyzing the conversion of dihydrodipicolinate to tetrahydrodipicolinate. However, it was shown in E.coli that the substrate of the enzymatic reaction is not dihydrodipicolinate (DHDP) but in fact (2S,4S)-4-hydroxy-2,3,4,5-tetrahydrodipicolinic acid (HTPA), the product released by the DapA-catalyzed reaction.</text>
</comment>
<sequence length="246" mass="26756">MRVGIIGCSGRMGTLLSNLLRATARFTLGPGFSRTSTHSLASVIDNNDVLVDFSSSSLSEELFRALLSNPKPLIFATTKPAPSSSIDEKIEDLAAYVPVVVCPNTSLGAYVQKRLAALLAAVFDDAYDIRITEVHHRGKKDAISGTANELVSILCDAKKKEWQQEYRVGADSDSVKNIELHASRVGNISGEHEIAFISDKEQITLRHTVFSREVFAEGVLRILDWLLNESPPPGCYGPEVGLKVSV</sequence>
<gene>
    <name evidence="1" type="primary">dapB</name>
    <name type="ordered locus">CCA_00715</name>
</gene>
<proteinExistence type="inferred from homology"/>
<evidence type="ECO:0000255" key="1">
    <source>
        <dbReference type="HAMAP-Rule" id="MF_00102"/>
    </source>
</evidence>
<evidence type="ECO:0000305" key="2"/>
<dbReference type="EC" id="1.17.1.8" evidence="1"/>
<dbReference type="EMBL" id="AE015925">
    <property type="protein sequence ID" value="AAP05457.1"/>
    <property type="molecule type" value="Genomic_DNA"/>
</dbReference>
<dbReference type="RefSeq" id="WP_011006671.1">
    <property type="nucleotide sequence ID" value="NC_003361.3"/>
</dbReference>
<dbReference type="SMR" id="Q822G7"/>
<dbReference type="STRING" id="227941.CCA_00715"/>
<dbReference type="KEGG" id="cca:CCA_00715"/>
<dbReference type="eggNOG" id="COG0289">
    <property type="taxonomic scope" value="Bacteria"/>
</dbReference>
<dbReference type="HOGENOM" id="CLU_047479_2_2_0"/>
<dbReference type="OrthoDB" id="9790352at2"/>
<dbReference type="UniPathway" id="UPA00034">
    <property type="reaction ID" value="UER00018"/>
</dbReference>
<dbReference type="Proteomes" id="UP000002193">
    <property type="component" value="Chromosome"/>
</dbReference>
<dbReference type="GO" id="GO:0005829">
    <property type="term" value="C:cytosol"/>
    <property type="evidence" value="ECO:0007669"/>
    <property type="project" value="TreeGrafter"/>
</dbReference>
<dbReference type="GO" id="GO:0008839">
    <property type="term" value="F:4-hydroxy-tetrahydrodipicolinate reductase"/>
    <property type="evidence" value="ECO:0007669"/>
    <property type="project" value="UniProtKB-EC"/>
</dbReference>
<dbReference type="GO" id="GO:0051287">
    <property type="term" value="F:NAD binding"/>
    <property type="evidence" value="ECO:0007669"/>
    <property type="project" value="UniProtKB-UniRule"/>
</dbReference>
<dbReference type="GO" id="GO:0050661">
    <property type="term" value="F:NADP binding"/>
    <property type="evidence" value="ECO:0007669"/>
    <property type="project" value="UniProtKB-UniRule"/>
</dbReference>
<dbReference type="GO" id="GO:0016726">
    <property type="term" value="F:oxidoreductase activity, acting on CH or CH2 groups, NAD or NADP as acceptor"/>
    <property type="evidence" value="ECO:0007669"/>
    <property type="project" value="UniProtKB-UniRule"/>
</dbReference>
<dbReference type="GO" id="GO:0019877">
    <property type="term" value="P:diaminopimelate biosynthetic process"/>
    <property type="evidence" value="ECO:0007669"/>
    <property type="project" value="UniProtKB-UniRule"/>
</dbReference>
<dbReference type="GO" id="GO:0009089">
    <property type="term" value="P:lysine biosynthetic process via diaminopimelate"/>
    <property type="evidence" value="ECO:0007669"/>
    <property type="project" value="UniProtKB-UniRule"/>
</dbReference>
<dbReference type="CDD" id="cd02274">
    <property type="entry name" value="DHDPR_N"/>
    <property type="match status" value="1"/>
</dbReference>
<dbReference type="Gene3D" id="3.30.360.10">
    <property type="entry name" value="Dihydrodipicolinate Reductase, domain 2"/>
    <property type="match status" value="1"/>
</dbReference>
<dbReference type="Gene3D" id="3.40.50.720">
    <property type="entry name" value="NAD(P)-binding Rossmann-like Domain"/>
    <property type="match status" value="1"/>
</dbReference>
<dbReference type="HAMAP" id="MF_00102">
    <property type="entry name" value="DapB"/>
    <property type="match status" value="1"/>
</dbReference>
<dbReference type="InterPro" id="IPR022663">
    <property type="entry name" value="DapB_C"/>
</dbReference>
<dbReference type="InterPro" id="IPR000846">
    <property type="entry name" value="DapB_N"/>
</dbReference>
<dbReference type="InterPro" id="IPR022664">
    <property type="entry name" value="DapB_N_CS"/>
</dbReference>
<dbReference type="InterPro" id="IPR023940">
    <property type="entry name" value="DHDPR_bac"/>
</dbReference>
<dbReference type="InterPro" id="IPR036291">
    <property type="entry name" value="NAD(P)-bd_dom_sf"/>
</dbReference>
<dbReference type="PANTHER" id="PTHR20836:SF0">
    <property type="entry name" value="4-HYDROXY-TETRAHYDRODIPICOLINATE REDUCTASE 1, CHLOROPLASTIC-RELATED"/>
    <property type="match status" value="1"/>
</dbReference>
<dbReference type="PANTHER" id="PTHR20836">
    <property type="entry name" value="DIHYDRODIPICOLINATE REDUCTASE"/>
    <property type="match status" value="1"/>
</dbReference>
<dbReference type="Pfam" id="PF05173">
    <property type="entry name" value="DapB_C"/>
    <property type="match status" value="1"/>
</dbReference>
<dbReference type="Pfam" id="PF01113">
    <property type="entry name" value="DapB_N"/>
    <property type="match status" value="1"/>
</dbReference>
<dbReference type="PIRSF" id="PIRSF000161">
    <property type="entry name" value="DHPR"/>
    <property type="match status" value="1"/>
</dbReference>
<dbReference type="SUPFAM" id="SSF55347">
    <property type="entry name" value="Glyceraldehyde-3-phosphate dehydrogenase-like, C-terminal domain"/>
    <property type="match status" value="1"/>
</dbReference>
<dbReference type="SUPFAM" id="SSF51735">
    <property type="entry name" value="NAD(P)-binding Rossmann-fold domains"/>
    <property type="match status" value="1"/>
</dbReference>
<dbReference type="PROSITE" id="PS01298">
    <property type="entry name" value="DAPB"/>
    <property type="match status" value="1"/>
</dbReference>
<protein>
    <recommendedName>
        <fullName evidence="1">4-hydroxy-tetrahydrodipicolinate reductase</fullName>
        <shortName evidence="1">HTPA reductase</shortName>
        <ecNumber evidence="1">1.17.1.8</ecNumber>
    </recommendedName>
</protein>
<accession>Q822G7</accession>
<name>DAPB_CHLCV</name>
<feature type="chain" id="PRO_0000141426" description="4-hydroxy-tetrahydrodipicolinate reductase">
    <location>
        <begin position="1"/>
        <end position="246"/>
    </location>
</feature>
<feature type="active site" description="Proton donor/acceptor" evidence="1">
    <location>
        <position position="135"/>
    </location>
</feature>
<feature type="active site" description="Proton donor" evidence="1">
    <location>
        <position position="139"/>
    </location>
</feature>
<feature type="binding site" evidence="1">
    <location>
        <begin position="7"/>
        <end position="12"/>
    </location>
    <ligand>
        <name>NAD(+)</name>
        <dbReference type="ChEBI" id="CHEBI:57540"/>
    </ligand>
</feature>
<feature type="binding site" evidence="1">
    <location>
        <position position="34"/>
    </location>
    <ligand>
        <name>NADP(+)</name>
        <dbReference type="ChEBI" id="CHEBI:58349"/>
    </ligand>
</feature>
<feature type="binding site" evidence="1">
    <location>
        <begin position="76"/>
        <end position="78"/>
    </location>
    <ligand>
        <name>NAD(+)</name>
        <dbReference type="ChEBI" id="CHEBI:57540"/>
    </ligand>
</feature>
<feature type="binding site" evidence="1">
    <location>
        <begin position="102"/>
        <end position="105"/>
    </location>
    <ligand>
        <name>NAD(+)</name>
        <dbReference type="ChEBI" id="CHEBI:57540"/>
    </ligand>
</feature>
<feature type="binding site" evidence="1">
    <location>
        <position position="136"/>
    </location>
    <ligand>
        <name>(S)-2,3,4,5-tetrahydrodipicolinate</name>
        <dbReference type="ChEBI" id="CHEBI:16845"/>
    </ligand>
</feature>
<feature type="binding site" evidence="1">
    <location>
        <begin position="145"/>
        <end position="146"/>
    </location>
    <ligand>
        <name>(S)-2,3,4,5-tetrahydrodipicolinate</name>
        <dbReference type="ChEBI" id="CHEBI:16845"/>
    </ligand>
</feature>
<reference key="1">
    <citation type="journal article" date="2003" name="Nucleic Acids Res.">
        <title>Genome sequence of Chlamydophila caviae (Chlamydia psittaci GPIC): examining the role of niche-specific genes in the evolution of the Chlamydiaceae.</title>
        <authorList>
            <person name="Read T.D."/>
            <person name="Myers G.S.A."/>
            <person name="Brunham R.C."/>
            <person name="Nelson W.C."/>
            <person name="Paulsen I.T."/>
            <person name="Heidelberg J.F."/>
            <person name="Holtzapple E.K."/>
            <person name="Khouri H.M."/>
            <person name="Federova N.B."/>
            <person name="Carty H.A."/>
            <person name="Umayam L.A."/>
            <person name="Haft D.H."/>
            <person name="Peterson J.D."/>
            <person name="Beanan M.J."/>
            <person name="White O."/>
            <person name="Salzberg S.L."/>
            <person name="Hsia R.-C."/>
            <person name="McClarty G."/>
            <person name="Rank R.G."/>
            <person name="Bavoil P.M."/>
            <person name="Fraser C.M."/>
        </authorList>
    </citation>
    <scope>NUCLEOTIDE SEQUENCE [LARGE SCALE GENOMIC DNA]</scope>
    <source>
        <strain>ATCC VR-813 / DSM 19441 / 03DC25 / GPIC</strain>
    </source>
</reference>
<organism>
    <name type="scientific">Chlamydia caviae (strain ATCC VR-813 / DSM 19441 / 03DC25 / GPIC)</name>
    <name type="common">Chlamydophila caviae</name>
    <dbReference type="NCBI Taxonomy" id="227941"/>
    <lineage>
        <taxon>Bacteria</taxon>
        <taxon>Pseudomonadati</taxon>
        <taxon>Chlamydiota</taxon>
        <taxon>Chlamydiia</taxon>
        <taxon>Chlamydiales</taxon>
        <taxon>Chlamydiaceae</taxon>
        <taxon>Chlamydia/Chlamydophila group</taxon>
        <taxon>Chlamydia</taxon>
    </lineage>
</organism>
<keyword id="KW-0028">Amino-acid biosynthesis</keyword>
<keyword id="KW-0963">Cytoplasm</keyword>
<keyword id="KW-0220">Diaminopimelate biosynthesis</keyword>
<keyword id="KW-0457">Lysine biosynthesis</keyword>
<keyword id="KW-0520">NAD</keyword>
<keyword id="KW-0521">NADP</keyword>
<keyword id="KW-0560">Oxidoreductase</keyword>